<gene>
    <name evidence="1" type="primary">glgA1</name>
    <name type="synonym">glgA</name>
    <name type="ordered locus">alr1879</name>
</gene>
<reference key="1">
    <citation type="journal article" date="2001" name="DNA Res.">
        <title>Complete genomic sequence of the filamentous nitrogen-fixing cyanobacterium Anabaena sp. strain PCC 7120.</title>
        <authorList>
            <person name="Kaneko T."/>
            <person name="Nakamura Y."/>
            <person name="Wolk C.P."/>
            <person name="Kuritz T."/>
            <person name="Sasamoto S."/>
            <person name="Watanabe A."/>
            <person name="Iriguchi M."/>
            <person name="Ishikawa A."/>
            <person name="Kawashima K."/>
            <person name="Kimura T."/>
            <person name="Kishida Y."/>
            <person name="Kohara M."/>
            <person name="Matsumoto M."/>
            <person name="Matsuno A."/>
            <person name="Muraki A."/>
            <person name="Nakazaki N."/>
            <person name="Shimpo S."/>
            <person name="Sugimoto M."/>
            <person name="Takazawa M."/>
            <person name="Yamada M."/>
            <person name="Yasuda M."/>
            <person name="Tabata S."/>
        </authorList>
    </citation>
    <scope>NUCLEOTIDE SEQUENCE [LARGE SCALE GENOMIC DNA]</scope>
    <source>
        <strain>PCC 7120 / SAG 25.82 / UTEX 2576</strain>
    </source>
</reference>
<sequence length="472" mass="54252">MRILFVAAEAAPIAKVGGMGDVVGALPKVLRKMGHDVRIFLPYYGFLPDKMEIPKDPIWKGYAMFQDFTVHEAVLPGTDVPLYLFGHPAFTPRRIYSGDDEDWRFTLFSNGAAEFCWNYWKPDIIHCHDWHTGMIPVWMNQSPDITTVFTIHNLAYQGPWRWYLDKITWCPWYMQGHNTMAAAVQFADRVNTVSPTYAEQIKTPAYGEKIEGLLSFISGKLSGIVNGIDTEVYDPANDKYIAQTFTADTLDKRKANKIALQEEVGLEVNSNAFLIGMVTRLVEQKGLDLVIQMLDRFMAYTDAQFVLLGTGDRYYETQMWQLASRYPGRMATYLLYNDALSRRIYAGTDAFLMPSRFEPCGISQMMALRYGSIPIVRRTGGLVDTVSHHDPINEAGTGYCFDRYEPLDLFTCMIRAWEGFRYKPQWQELQKRGMSQDFSWYKSAKEYDKLYRSMYGLPDPEETQPELILTNQ</sequence>
<accession>Q8YVU5</accession>
<organism>
    <name type="scientific">Nostoc sp. (strain PCC 7120 / SAG 25.82 / UTEX 2576)</name>
    <dbReference type="NCBI Taxonomy" id="103690"/>
    <lineage>
        <taxon>Bacteria</taxon>
        <taxon>Bacillati</taxon>
        <taxon>Cyanobacteriota</taxon>
        <taxon>Cyanophyceae</taxon>
        <taxon>Nostocales</taxon>
        <taxon>Nostocaceae</taxon>
        <taxon>Nostoc</taxon>
    </lineage>
</organism>
<feature type="chain" id="PRO_0000188587" description="Glycogen synthase 1">
    <location>
        <begin position="1"/>
        <end position="472"/>
    </location>
</feature>
<feature type="binding site" evidence="1">
    <location>
        <position position="15"/>
    </location>
    <ligand>
        <name>ADP-alpha-D-glucose</name>
        <dbReference type="ChEBI" id="CHEBI:57498"/>
    </ligand>
</feature>
<name>GLGA1_NOSS1</name>
<dbReference type="EC" id="2.4.1.21" evidence="1"/>
<dbReference type="EMBL" id="BA000019">
    <property type="protein sequence ID" value="BAB73578.1"/>
    <property type="molecule type" value="Genomic_DNA"/>
</dbReference>
<dbReference type="PIR" id="AI2040">
    <property type="entry name" value="AI2040"/>
</dbReference>
<dbReference type="RefSeq" id="WP_010996043.1">
    <property type="nucleotide sequence ID" value="NZ_RSCN01000017.1"/>
</dbReference>
<dbReference type="SMR" id="Q8YVU5"/>
<dbReference type="STRING" id="103690.gene:10493898"/>
<dbReference type="CAZy" id="GT5">
    <property type="family name" value="Glycosyltransferase Family 5"/>
</dbReference>
<dbReference type="KEGG" id="ana:alr1879"/>
<dbReference type="eggNOG" id="COG0297">
    <property type="taxonomic scope" value="Bacteria"/>
</dbReference>
<dbReference type="OrthoDB" id="9808590at2"/>
<dbReference type="UniPathway" id="UPA00164"/>
<dbReference type="Proteomes" id="UP000002483">
    <property type="component" value="Chromosome"/>
</dbReference>
<dbReference type="GO" id="GO:0009011">
    <property type="term" value="F:alpha-1,4-glucan glucosyltransferase (ADP-glucose donor) activity"/>
    <property type="evidence" value="ECO:0007669"/>
    <property type="project" value="UniProtKB-UniRule"/>
</dbReference>
<dbReference type="GO" id="GO:0004373">
    <property type="term" value="F:alpha-1,4-glucan glucosyltransferase (UDP-glucose donor) activity"/>
    <property type="evidence" value="ECO:0007669"/>
    <property type="project" value="InterPro"/>
</dbReference>
<dbReference type="GO" id="GO:0005978">
    <property type="term" value="P:glycogen biosynthetic process"/>
    <property type="evidence" value="ECO:0007669"/>
    <property type="project" value="UniProtKB-UniRule"/>
</dbReference>
<dbReference type="CDD" id="cd03791">
    <property type="entry name" value="GT5_Glycogen_synthase_DULL1-like"/>
    <property type="match status" value="1"/>
</dbReference>
<dbReference type="Gene3D" id="3.40.50.2000">
    <property type="entry name" value="Glycogen Phosphorylase B"/>
    <property type="match status" value="2"/>
</dbReference>
<dbReference type="HAMAP" id="MF_00484">
    <property type="entry name" value="Glycogen_synth"/>
    <property type="match status" value="1"/>
</dbReference>
<dbReference type="InterPro" id="IPR001296">
    <property type="entry name" value="Glyco_trans_1"/>
</dbReference>
<dbReference type="InterPro" id="IPR011835">
    <property type="entry name" value="GS/SS"/>
</dbReference>
<dbReference type="InterPro" id="IPR013534">
    <property type="entry name" value="Starch_synth_cat_dom"/>
</dbReference>
<dbReference type="NCBIfam" id="TIGR02095">
    <property type="entry name" value="glgA"/>
    <property type="match status" value="1"/>
</dbReference>
<dbReference type="NCBIfam" id="NF001900">
    <property type="entry name" value="PRK00654.1-3"/>
    <property type="match status" value="1"/>
</dbReference>
<dbReference type="PANTHER" id="PTHR45825:SF11">
    <property type="entry name" value="ALPHA AMYLASE DOMAIN-CONTAINING PROTEIN"/>
    <property type="match status" value="1"/>
</dbReference>
<dbReference type="PANTHER" id="PTHR45825">
    <property type="entry name" value="GRANULE-BOUND STARCH SYNTHASE 1, CHLOROPLASTIC/AMYLOPLASTIC"/>
    <property type="match status" value="1"/>
</dbReference>
<dbReference type="Pfam" id="PF08323">
    <property type="entry name" value="Glyco_transf_5"/>
    <property type="match status" value="1"/>
</dbReference>
<dbReference type="Pfam" id="PF00534">
    <property type="entry name" value="Glycos_transf_1"/>
    <property type="match status" value="1"/>
</dbReference>
<dbReference type="SUPFAM" id="SSF53756">
    <property type="entry name" value="UDP-Glycosyltransferase/glycogen phosphorylase"/>
    <property type="match status" value="1"/>
</dbReference>
<comment type="function">
    <text evidence="1">Synthesizes alpha-1,4-glucan chains using ADP-glucose.</text>
</comment>
<comment type="catalytic activity">
    <reaction evidence="1">
        <text>[(1-&gt;4)-alpha-D-glucosyl](n) + ADP-alpha-D-glucose = [(1-&gt;4)-alpha-D-glucosyl](n+1) + ADP + H(+)</text>
        <dbReference type="Rhea" id="RHEA:18189"/>
        <dbReference type="Rhea" id="RHEA-COMP:9584"/>
        <dbReference type="Rhea" id="RHEA-COMP:9587"/>
        <dbReference type="ChEBI" id="CHEBI:15378"/>
        <dbReference type="ChEBI" id="CHEBI:15444"/>
        <dbReference type="ChEBI" id="CHEBI:57498"/>
        <dbReference type="ChEBI" id="CHEBI:456216"/>
        <dbReference type="EC" id="2.4.1.21"/>
    </reaction>
</comment>
<comment type="pathway">
    <text evidence="1">Glycan biosynthesis; glycogen biosynthesis.</text>
</comment>
<comment type="similarity">
    <text evidence="1">Belongs to the glycosyltransferase 1 family. Bacterial/plant glycogen synthase subfamily.</text>
</comment>
<protein>
    <recommendedName>
        <fullName evidence="1">Glycogen synthase 1</fullName>
        <ecNumber evidence="1">2.4.1.21</ecNumber>
    </recommendedName>
    <alternativeName>
        <fullName evidence="1">Starch [bacterial glycogen] synthase 1</fullName>
    </alternativeName>
</protein>
<proteinExistence type="inferred from homology"/>
<keyword id="KW-0320">Glycogen biosynthesis</keyword>
<keyword id="KW-0328">Glycosyltransferase</keyword>
<keyword id="KW-1185">Reference proteome</keyword>
<keyword id="KW-0808">Transferase</keyword>
<evidence type="ECO:0000255" key="1">
    <source>
        <dbReference type="HAMAP-Rule" id="MF_00484"/>
    </source>
</evidence>